<reference key="1">
    <citation type="journal article" date="2002" name="Nucleic Acids Res.">
        <title>Genome sequence of Shigella flexneri 2a: insights into pathogenicity through comparison with genomes of Escherichia coli K12 and O157.</title>
        <authorList>
            <person name="Jin Q."/>
            <person name="Yuan Z."/>
            <person name="Xu J."/>
            <person name="Wang Y."/>
            <person name="Shen Y."/>
            <person name="Lu W."/>
            <person name="Wang J."/>
            <person name="Liu H."/>
            <person name="Yang J."/>
            <person name="Yang F."/>
            <person name="Zhang X."/>
            <person name="Zhang J."/>
            <person name="Yang G."/>
            <person name="Wu H."/>
            <person name="Qu D."/>
            <person name="Dong J."/>
            <person name="Sun L."/>
            <person name="Xue Y."/>
            <person name="Zhao A."/>
            <person name="Gao Y."/>
            <person name="Zhu J."/>
            <person name="Kan B."/>
            <person name="Ding K."/>
            <person name="Chen S."/>
            <person name="Cheng H."/>
            <person name="Yao Z."/>
            <person name="He B."/>
            <person name="Chen R."/>
            <person name="Ma D."/>
            <person name="Qiang B."/>
            <person name="Wen Y."/>
            <person name="Hou Y."/>
            <person name="Yu J."/>
        </authorList>
    </citation>
    <scope>NUCLEOTIDE SEQUENCE [LARGE SCALE GENOMIC DNA]</scope>
    <source>
        <strain>301 / Serotype 2a</strain>
    </source>
</reference>
<keyword id="KW-0233">DNA recombination</keyword>
<keyword id="KW-0238">DNA-binding</keyword>
<keyword id="KW-1185">Reference proteome</keyword>
<keyword id="KW-0814">Transposable element</keyword>
<keyword id="KW-0815">Transposition</keyword>
<evidence type="ECO:0000250" key="1"/>
<evidence type="ECO:0000305" key="2"/>
<dbReference type="EMBL" id="AE005674">
    <property type="protein sequence ID" value="AAN41906.1"/>
    <property type="status" value="ALT_INIT"/>
    <property type="molecule type" value="Genomic_DNA"/>
</dbReference>
<dbReference type="EMBL" id="AE005674">
    <property type="protein sequence ID" value="AAN42511.1"/>
    <property type="status" value="ALT_INIT"/>
    <property type="molecule type" value="Genomic_DNA"/>
</dbReference>
<dbReference type="EMBL" id="AE005674">
    <property type="protein sequence ID" value="AAN42562.1"/>
    <property type="status" value="ALT_INIT"/>
    <property type="molecule type" value="Genomic_DNA"/>
</dbReference>
<dbReference type="EMBL" id="AE005674">
    <property type="protein sequence ID" value="AAN42588.1"/>
    <property type="status" value="ALT_INIT"/>
    <property type="molecule type" value="Genomic_DNA"/>
</dbReference>
<dbReference type="EMBL" id="AE005674">
    <property type="protein sequence ID" value="AAN42676.1"/>
    <property type="status" value="ALT_INIT"/>
    <property type="molecule type" value="Genomic_DNA"/>
</dbReference>
<dbReference type="EMBL" id="AE005674">
    <property type="protein sequence ID" value="AAN42781.1"/>
    <property type="status" value="ALT_INIT"/>
    <property type="molecule type" value="Genomic_DNA"/>
</dbReference>
<dbReference type="EMBL" id="AE005674">
    <property type="protein sequence ID" value="AAN42947.1"/>
    <property type="status" value="ALT_INIT"/>
    <property type="molecule type" value="Genomic_DNA"/>
</dbReference>
<dbReference type="EMBL" id="AE005674">
    <property type="protein sequence ID" value="AAN43060.1"/>
    <property type="status" value="ALT_INIT"/>
    <property type="molecule type" value="Genomic_DNA"/>
</dbReference>
<dbReference type="EMBL" id="AE005674">
    <property type="protein sequence ID" value="AAN43173.1"/>
    <property type="status" value="ALT_INIT"/>
    <property type="molecule type" value="Genomic_DNA"/>
</dbReference>
<dbReference type="EMBL" id="AE005674">
    <property type="protein sequence ID" value="AAN43556.1"/>
    <property type="status" value="ALT_INIT"/>
    <property type="molecule type" value="Genomic_DNA"/>
</dbReference>
<dbReference type="EMBL" id="AE005674">
    <property type="protein sequence ID" value="AAN44112.1"/>
    <property type="status" value="ALT_INIT"/>
    <property type="molecule type" value="Genomic_DNA"/>
</dbReference>
<dbReference type="EMBL" id="AE005674">
    <property type="protein sequence ID" value="AAN44187.1"/>
    <property type="status" value="ALT_INIT"/>
    <property type="molecule type" value="Genomic_DNA"/>
</dbReference>
<dbReference type="EMBL" id="AE005674">
    <property type="protein sequence ID" value="AAN44359.1"/>
    <property type="status" value="ALT_INIT"/>
    <property type="molecule type" value="Genomic_DNA"/>
</dbReference>
<dbReference type="EMBL" id="AE005674">
    <property type="protein sequence ID" value="AAN44465.1"/>
    <property type="status" value="ALT_INIT"/>
    <property type="molecule type" value="Genomic_DNA"/>
</dbReference>
<dbReference type="EMBL" id="AE005674">
    <property type="protein sequence ID" value="AAN44892.1"/>
    <property type="status" value="ALT_INIT"/>
    <property type="molecule type" value="Genomic_DNA"/>
</dbReference>
<dbReference type="EMBL" id="AE005674">
    <property type="protein sequence ID" value="AAN44970.1"/>
    <property type="status" value="ALT_INIT"/>
    <property type="molecule type" value="Genomic_DNA"/>
</dbReference>
<dbReference type="EMBL" id="AE005674">
    <property type="protein sequence ID" value="AAN45245.1"/>
    <property type="status" value="ALT_INIT"/>
    <property type="molecule type" value="Genomic_DNA"/>
</dbReference>
<dbReference type="EMBL" id="AE005674">
    <property type="protein sequence ID" value="AAN45310.1"/>
    <property type="status" value="ALT_INIT"/>
    <property type="molecule type" value="Genomic_DNA"/>
</dbReference>
<dbReference type="EMBL" id="AE005674">
    <property type="protein sequence ID" value="AAN45422.1"/>
    <property type="status" value="ALT_INIT"/>
    <property type="molecule type" value="Genomic_DNA"/>
</dbReference>
<dbReference type="EMBL" id="AE005674">
    <property type="protein sequence ID" value="AAN45522.1"/>
    <property type="status" value="ALT_INIT"/>
    <property type="molecule type" value="Genomic_DNA"/>
</dbReference>
<dbReference type="EMBL" id="AE005674">
    <property type="protein sequence ID" value="AAN45606.1"/>
    <property type="status" value="ALT_INIT"/>
    <property type="molecule type" value="Genomic_DNA"/>
</dbReference>
<dbReference type="RefSeq" id="NP_706199.3">
    <property type="nucleotide sequence ID" value="NC_004337.2"/>
</dbReference>
<dbReference type="RefSeq" id="NP_706804.3">
    <property type="nucleotide sequence ID" value="NC_004337.2"/>
</dbReference>
<dbReference type="RefSeq" id="NP_706855.3">
    <property type="nucleotide sequence ID" value="NC_004337.2"/>
</dbReference>
<dbReference type="RefSeq" id="NP_706881.3">
    <property type="nucleotide sequence ID" value="NC_004337.2"/>
</dbReference>
<dbReference type="RefSeq" id="NP_706969.3">
    <property type="nucleotide sequence ID" value="NC_004337.2"/>
</dbReference>
<dbReference type="RefSeq" id="NP_707074.3">
    <property type="nucleotide sequence ID" value="NC_004337.2"/>
</dbReference>
<dbReference type="RefSeq" id="NP_707240.3">
    <property type="nucleotide sequence ID" value="NC_004337.2"/>
</dbReference>
<dbReference type="RefSeq" id="NP_707353.3">
    <property type="nucleotide sequence ID" value="NC_004337.2"/>
</dbReference>
<dbReference type="RefSeq" id="NP_707466.3">
    <property type="nucleotide sequence ID" value="NC_004337.2"/>
</dbReference>
<dbReference type="RefSeq" id="NP_707849.3">
    <property type="nucleotide sequence ID" value="NC_004337.2"/>
</dbReference>
<dbReference type="RefSeq" id="NP_708405.3">
    <property type="nucleotide sequence ID" value="NC_004337.2"/>
</dbReference>
<dbReference type="RefSeq" id="NP_708480.3">
    <property type="nucleotide sequence ID" value="NC_004337.2"/>
</dbReference>
<dbReference type="RefSeq" id="NP_708652.3">
    <property type="nucleotide sequence ID" value="NC_004337.2"/>
</dbReference>
<dbReference type="RefSeq" id="NP_708758.3">
    <property type="nucleotide sequence ID" value="NC_004337.2"/>
</dbReference>
<dbReference type="RefSeq" id="NP_709185.3">
    <property type="nucleotide sequence ID" value="NC_004337.2"/>
</dbReference>
<dbReference type="RefSeq" id="NP_709263.3">
    <property type="nucleotide sequence ID" value="NC_004337.2"/>
</dbReference>
<dbReference type="RefSeq" id="NP_709538.3">
    <property type="nucleotide sequence ID" value="NC_004337.2"/>
</dbReference>
<dbReference type="RefSeq" id="NP_709603.3">
    <property type="nucleotide sequence ID" value="NC_004337.2"/>
</dbReference>
<dbReference type="RefSeq" id="NP_709715.3">
    <property type="nucleotide sequence ID" value="NC_004337.2"/>
</dbReference>
<dbReference type="RefSeq" id="NP_709815.3">
    <property type="nucleotide sequence ID" value="NC_004337.2"/>
</dbReference>
<dbReference type="RefSeq" id="NP_709899.3">
    <property type="nucleotide sequence ID" value="NC_004337.2"/>
</dbReference>
<dbReference type="RefSeq" id="WP_000567766.1">
    <property type="nucleotide sequence ID" value="NZ_WACK01000001.1"/>
</dbReference>
<dbReference type="RefSeq" id="YP_006960326.1">
    <property type="nucleotide sequence ID" value="NC_019197.1"/>
</dbReference>
<dbReference type="RefSeq" id="YP_006960340.1">
    <property type="nucleotide sequence ID" value="NC_019197.1"/>
</dbReference>
<dbReference type="SMR" id="P59444"/>
<dbReference type="STRING" id="198214.SF0245"/>
<dbReference type="PaxDb" id="198214-CP0208"/>
<dbReference type="GeneID" id="1023413"/>
<dbReference type="GeneID" id="1023454"/>
<dbReference type="GeneID" id="1023841"/>
<dbReference type="GeneID" id="1023878"/>
<dbReference type="GeneID" id="1023949"/>
<dbReference type="GeneID" id="1024026"/>
<dbReference type="GeneID" id="1024102"/>
<dbReference type="GeneID" id="1024116"/>
<dbReference type="GeneID" id="1024275"/>
<dbReference type="GeneID" id="1024319"/>
<dbReference type="GeneID" id="1024788"/>
<dbReference type="GeneID" id="1025841"/>
<dbReference type="GeneID" id="1025979"/>
<dbReference type="GeneID" id="1026076"/>
<dbReference type="GeneID" id="1026420"/>
<dbReference type="GeneID" id="1026523"/>
<dbReference type="GeneID" id="1026607"/>
<dbReference type="GeneID" id="1026737"/>
<dbReference type="GeneID" id="1026913"/>
<dbReference type="GeneID" id="1026934"/>
<dbReference type="GeneID" id="1027786"/>
<dbReference type="KEGG" id="sfl:SF0245"/>
<dbReference type="KEGG" id="sfl:SF0879"/>
<dbReference type="KEGG" id="sfl:SF0933"/>
<dbReference type="KEGG" id="sfl:SF0960"/>
<dbReference type="KEGG" id="sfl:SF1054"/>
<dbReference type="KEGG" id="sfl:SF1165"/>
<dbReference type="KEGG" id="sfl:SF1343"/>
<dbReference type="KEGG" id="sfl:SF1463"/>
<dbReference type="KEGG" id="sfl:SF1587"/>
<dbReference type="KEGG" id="sfl:SF2011"/>
<dbReference type="KEGG" id="sfl:SF2615"/>
<dbReference type="KEGG" id="sfl:SF2694"/>
<dbReference type="KEGG" id="sfl:SF2873"/>
<dbReference type="KEGG" id="sfl:SF2984"/>
<dbReference type="KEGG" id="sfl:SF3431"/>
<dbReference type="KEGG" id="sfl:SF3512"/>
<dbReference type="KEGG" id="sfl:SF3805"/>
<dbReference type="KEGG" id="sfl:SF3873"/>
<dbReference type="KEGG" id="sfl:SF3988"/>
<dbReference type="KEGG" id="sfl:SF4097"/>
<dbReference type="KEGG" id="sfl:SF4185"/>
<dbReference type="PATRIC" id="fig|198214.7.peg.3548"/>
<dbReference type="HOGENOM" id="CLU_027402_25_0_6"/>
<dbReference type="Proteomes" id="UP000001006">
    <property type="component" value="Chromosome"/>
</dbReference>
<dbReference type="GO" id="GO:0003677">
    <property type="term" value="F:DNA binding"/>
    <property type="evidence" value="ECO:0007669"/>
    <property type="project" value="UniProtKB-KW"/>
</dbReference>
<dbReference type="GO" id="GO:0004803">
    <property type="term" value="F:transposase activity"/>
    <property type="evidence" value="ECO:0007669"/>
    <property type="project" value="InterPro"/>
</dbReference>
<dbReference type="GO" id="GO:0006313">
    <property type="term" value="P:DNA transposition"/>
    <property type="evidence" value="ECO:0007669"/>
    <property type="project" value="InterPro"/>
</dbReference>
<dbReference type="Gene3D" id="1.10.10.10">
    <property type="entry name" value="Winged helix-like DNA-binding domain superfamily/Winged helix DNA-binding domain"/>
    <property type="match status" value="1"/>
</dbReference>
<dbReference type="InterPro" id="IPR009057">
    <property type="entry name" value="Homeodomain-like_sf"/>
</dbReference>
<dbReference type="InterPro" id="IPR002514">
    <property type="entry name" value="Transposase_8"/>
</dbReference>
<dbReference type="InterPro" id="IPR036388">
    <property type="entry name" value="WH-like_DNA-bd_sf"/>
</dbReference>
<dbReference type="NCBIfam" id="NF006928">
    <property type="entry name" value="PRK09413.1"/>
    <property type="match status" value="1"/>
</dbReference>
<dbReference type="PANTHER" id="PTHR37936">
    <property type="entry name" value="TRANSPOSASE INSC FOR INSERTION ELEMENT IS2A-RELATED"/>
    <property type="match status" value="1"/>
</dbReference>
<dbReference type="PANTHER" id="PTHR37936:SF3">
    <property type="entry name" value="TRANSPOSASE INSC FOR INSERTION ELEMENT IS2A-RELATED"/>
    <property type="match status" value="1"/>
</dbReference>
<dbReference type="Pfam" id="PF01527">
    <property type="entry name" value="HTH_Tnp_1"/>
    <property type="match status" value="1"/>
</dbReference>
<dbReference type="SUPFAM" id="SSF46689">
    <property type="entry name" value="Homeodomain-like"/>
    <property type="match status" value="1"/>
</dbReference>
<sequence length="121" mass="13452">MIDVLGPEKRRRRTTQEKIAIVQQSFEPGMTVSLVARQHGVAASQLFLWRKQYQEGSLTAVAAGEQVVPASELAAAMKQIKELQRLLGKKTMENELLKEAVEYGRAKKWIAHAPLLPGDGE</sequence>
<gene>
    <name type="primary">insC1</name>
    <name type="ordered locus">SF0245</name>
</gene>
<gene>
    <name type="primary">insC2</name>
    <name type="ordered locus">SF0879</name>
</gene>
<gene>
    <name type="primary">insC3</name>
    <name type="ordered locus">SF0933</name>
</gene>
<gene>
    <name type="primary">insC4</name>
    <name type="ordered locus">SF0960</name>
</gene>
<gene>
    <name type="primary">insC5</name>
    <name type="ordered locus">SF1054</name>
</gene>
<gene>
    <name type="primary">insC6</name>
    <name type="ordered locus">SF1165</name>
</gene>
<gene>
    <name type="primary">insC7</name>
    <name type="ordered locus">SF1343</name>
</gene>
<gene>
    <name type="primary">insC8</name>
    <name type="ordered locus">SF1463</name>
</gene>
<gene>
    <name type="primary">insC9</name>
    <name type="ordered locus">SF1587</name>
</gene>
<gene>
    <name type="primary">insC10</name>
    <name type="ordered locus">SF2011</name>
</gene>
<gene>
    <name type="primary">insC11</name>
    <name type="ordered locus">SF2615</name>
</gene>
<gene>
    <name type="primary">insC12</name>
    <name type="ordered locus">SF2694</name>
</gene>
<gene>
    <name type="primary">insC13</name>
    <name type="ordered locus">SF2873</name>
</gene>
<gene>
    <name type="primary">insC14</name>
    <name type="ordered locus">SF2984</name>
</gene>
<gene>
    <name type="primary">insC15</name>
    <name type="ordered locus">SF3431</name>
</gene>
<gene>
    <name type="primary">insC16</name>
    <name type="ordered locus">SF3512</name>
</gene>
<gene>
    <name type="primary">insC17</name>
    <name type="ordered locus">SF3805</name>
</gene>
<gene>
    <name type="primary">insC18</name>
    <name type="ordered locus">SF3873</name>
</gene>
<gene>
    <name type="primary">insC19</name>
    <name type="ordered locus">SF3988</name>
</gene>
<gene>
    <name type="primary">insC20</name>
    <name type="ordered locus">SF4097</name>
</gene>
<gene>
    <name type="primary">insC21</name>
    <name type="ordered locus">SF4185</name>
</gene>
<feature type="chain" id="PRO_0000075410" description="Transposase InsC for insertion element IS2">
    <location>
        <begin position="1"/>
        <end position="121"/>
    </location>
</feature>
<protein>
    <recommendedName>
        <fullName>Transposase InsC for insertion element IS2</fullName>
    </recommendedName>
</protein>
<accession>P59444</accession>
<name>INSC_SHIFL</name>
<comment type="function">
    <text evidence="1">Involved in the transposition of the insertion sequence IS2.</text>
</comment>
<comment type="similarity">
    <text evidence="2">Belongs to the transposase 8 family.</text>
</comment>
<comment type="sequence caution" evidence="2">
    <conflict type="erroneous initiation">
        <sequence resource="EMBL-CDS" id="AAN41906"/>
    </conflict>
</comment>
<comment type="sequence caution" evidence="2">
    <conflict type="erroneous initiation">
        <sequence resource="EMBL-CDS" id="AAN42511"/>
    </conflict>
</comment>
<comment type="sequence caution" evidence="2">
    <conflict type="erroneous initiation">
        <sequence resource="EMBL-CDS" id="AAN42562"/>
    </conflict>
</comment>
<comment type="sequence caution" evidence="2">
    <conflict type="erroneous initiation">
        <sequence resource="EMBL-CDS" id="AAN42588"/>
    </conflict>
</comment>
<comment type="sequence caution" evidence="2">
    <conflict type="erroneous initiation">
        <sequence resource="EMBL-CDS" id="AAN42676"/>
    </conflict>
</comment>
<comment type="sequence caution" evidence="2">
    <conflict type="erroneous initiation">
        <sequence resource="EMBL-CDS" id="AAN42781"/>
    </conflict>
</comment>
<comment type="sequence caution" evidence="2">
    <conflict type="erroneous initiation">
        <sequence resource="EMBL-CDS" id="AAN42947"/>
    </conflict>
</comment>
<comment type="sequence caution" evidence="2">
    <conflict type="erroneous initiation">
        <sequence resource="EMBL-CDS" id="AAN43060"/>
    </conflict>
</comment>
<comment type="sequence caution" evidence="2">
    <conflict type="erroneous initiation">
        <sequence resource="EMBL-CDS" id="AAN43173"/>
    </conflict>
</comment>
<comment type="sequence caution" evidence="2">
    <conflict type="erroneous initiation">
        <sequence resource="EMBL-CDS" id="AAN43556"/>
    </conflict>
</comment>
<comment type="sequence caution" evidence="2">
    <conflict type="erroneous initiation">
        <sequence resource="EMBL-CDS" id="AAN44112"/>
    </conflict>
</comment>
<comment type="sequence caution" evidence="2">
    <conflict type="erroneous initiation">
        <sequence resource="EMBL-CDS" id="AAN44187"/>
    </conflict>
</comment>
<comment type="sequence caution" evidence="2">
    <conflict type="erroneous initiation">
        <sequence resource="EMBL-CDS" id="AAN44359"/>
    </conflict>
</comment>
<comment type="sequence caution" evidence="2">
    <conflict type="erroneous initiation">
        <sequence resource="EMBL-CDS" id="AAN44465"/>
    </conflict>
</comment>
<comment type="sequence caution" evidence="2">
    <conflict type="erroneous initiation">
        <sequence resource="EMBL-CDS" id="AAN44892"/>
    </conflict>
</comment>
<comment type="sequence caution" evidence="2">
    <conflict type="erroneous initiation">
        <sequence resource="EMBL-CDS" id="AAN44970"/>
    </conflict>
</comment>
<comment type="sequence caution" evidence="2">
    <conflict type="erroneous initiation">
        <sequence resource="EMBL-CDS" id="AAN45245"/>
    </conflict>
</comment>
<comment type="sequence caution" evidence="2">
    <conflict type="erroneous initiation">
        <sequence resource="EMBL-CDS" id="AAN45310"/>
    </conflict>
</comment>
<comment type="sequence caution" evidence="2">
    <conflict type="erroneous initiation">
        <sequence resource="EMBL-CDS" id="AAN45422"/>
    </conflict>
</comment>
<comment type="sequence caution" evidence="2">
    <conflict type="erroneous initiation">
        <sequence resource="EMBL-CDS" id="AAN45522"/>
    </conflict>
</comment>
<comment type="sequence caution" evidence="2">
    <conflict type="erroneous initiation">
        <sequence resource="EMBL-CDS" id="AAN45606"/>
    </conflict>
</comment>
<organism>
    <name type="scientific">Shigella flexneri</name>
    <dbReference type="NCBI Taxonomy" id="623"/>
    <lineage>
        <taxon>Bacteria</taxon>
        <taxon>Pseudomonadati</taxon>
        <taxon>Pseudomonadota</taxon>
        <taxon>Gammaproteobacteria</taxon>
        <taxon>Enterobacterales</taxon>
        <taxon>Enterobacteriaceae</taxon>
        <taxon>Shigella</taxon>
    </lineage>
</organism>
<proteinExistence type="inferred from homology"/>